<accession>A1V1B6</accession>
<comment type="function">
    <text evidence="1">Nucleotide-binding protein.</text>
</comment>
<comment type="similarity">
    <text evidence="1">Belongs to the YajQ family.</text>
</comment>
<reference key="1">
    <citation type="journal article" date="2010" name="Genome Biol. Evol.">
        <title>Continuing evolution of Burkholderia mallei through genome reduction and large-scale rearrangements.</title>
        <authorList>
            <person name="Losada L."/>
            <person name="Ronning C.M."/>
            <person name="DeShazer D."/>
            <person name="Woods D."/>
            <person name="Fedorova N."/>
            <person name="Kim H.S."/>
            <person name="Shabalina S.A."/>
            <person name="Pearson T.R."/>
            <person name="Brinkac L."/>
            <person name="Tan P."/>
            <person name="Nandi T."/>
            <person name="Crabtree J."/>
            <person name="Badger J."/>
            <person name="Beckstrom-Sternberg S."/>
            <person name="Saqib M."/>
            <person name="Schutzer S.E."/>
            <person name="Keim P."/>
            <person name="Nierman W.C."/>
        </authorList>
    </citation>
    <scope>NUCLEOTIDE SEQUENCE [LARGE SCALE GENOMIC DNA]</scope>
    <source>
        <strain>SAVP1</strain>
    </source>
</reference>
<proteinExistence type="inferred from homology"/>
<feature type="chain" id="PRO_1000051720" description="Nucleotide-binding protein BMASAVP1_A0673">
    <location>
        <begin position="1"/>
        <end position="161"/>
    </location>
</feature>
<organism>
    <name type="scientific">Burkholderia mallei (strain SAVP1)</name>
    <dbReference type="NCBI Taxonomy" id="320388"/>
    <lineage>
        <taxon>Bacteria</taxon>
        <taxon>Pseudomonadati</taxon>
        <taxon>Pseudomonadota</taxon>
        <taxon>Betaproteobacteria</taxon>
        <taxon>Burkholderiales</taxon>
        <taxon>Burkholderiaceae</taxon>
        <taxon>Burkholderia</taxon>
        <taxon>pseudomallei group</taxon>
    </lineage>
</organism>
<protein>
    <recommendedName>
        <fullName evidence="1">Nucleotide-binding protein BMASAVP1_A0673</fullName>
    </recommendedName>
</protein>
<name>Y2473_BURMS</name>
<evidence type="ECO:0000255" key="1">
    <source>
        <dbReference type="HAMAP-Rule" id="MF_00632"/>
    </source>
</evidence>
<dbReference type="EMBL" id="CP000526">
    <property type="protein sequence ID" value="ABM50491.1"/>
    <property type="molecule type" value="Genomic_DNA"/>
</dbReference>
<dbReference type="RefSeq" id="WP_004189237.1">
    <property type="nucleotide sequence ID" value="NC_008785.1"/>
</dbReference>
<dbReference type="SMR" id="A1V1B6"/>
<dbReference type="KEGG" id="bmv:BMASAVP1_A0673"/>
<dbReference type="HOGENOM" id="CLU_099839_1_0_4"/>
<dbReference type="GO" id="GO:0005829">
    <property type="term" value="C:cytosol"/>
    <property type="evidence" value="ECO:0007669"/>
    <property type="project" value="TreeGrafter"/>
</dbReference>
<dbReference type="GO" id="GO:0000166">
    <property type="term" value="F:nucleotide binding"/>
    <property type="evidence" value="ECO:0007669"/>
    <property type="project" value="TreeGrafter"/>
</dbReference>
<dbReference type="CDD" id="cd11740">
    <property type="entry name" value="YajQ_like"/>
    <property type="match status" value="1"/>
</dbReference>
<dbReference type="Gene3D" id="3.30.70.860">
    <property type="match status" value="1"/>
</dbReference>
<dbReference type="Gene3D" id="3.30.70.990">
    <property type="entry name" value="YajQ-like, domain 2"/>
    <property type="match status" value="1"/>
</dbReference>
<dbReference type="HAMAP" id="MF_00632">
    <property type="entry name" value="YajQ"/>
    <property type="match status" value="1"/>
</dbReference>
<dbReference type="InterPro" id="IPR007551">
    <property type="entry name" value="DUF520"/>
</dbReference>
<dbReference type="InterPro" id="IPR035571">
    <property type="entry name" value="UPF0234-like_C"/>
</dbReference>
<dbReference type="InterPro" id="IPR035570">
    <property type="entry name" value="UPF0234_N"/>
</dbReference>
<dbReference type="InterPro" id="IPR036183">
    <property type="entry name" value="YajQ-like_sf"/>
</dbReference>
<dbReference type="NCBIfam" id="NF003819">
    <property type="entry name" value="PRK05412.1"/>
    <property type="match status" value="1"/>
</dbReference>
<dbReference type="PANTHER" id="PTHR30476">
    <property type="entry name" value="UPF0234 PROTEIN YAJQ"/>
    <property type="match status" value="1"/>
</dbReference>
<dbReference type="PANTHER" id="PTHR30476:SF0">
    <property type="entry name" value="UPF0234 PROTEIN YAJQ"/>
    <property type="match status" value="1"/>
</dbReference>
<dbReference type="Pfam" id="PF04461">
    <property type="entry name" value="DUF520"/>
    <property type="match status" value="1"/>
</dbReference>
<dbReference type="SUPFAM" id="SSF89963">
    <property type="entry name" value="YajQ-like"/>
    <property type="match status" value="2"/>
</dbReference>
<keyword id="KW-0547">Nucleotide-binding</keyword>
<gene>
    <name type="ordered locus">BMASAVP1_A0673</name>
</gene>
<sequence length="161" mass="18036">MPSFDVVSEANMIEVKNAVEQSNKEISTRFDFKGSDARVEQKERELTLYADDDFKLGQVKDVLIGKMAKRNVDVRFLDYGKIEKIGGDKVKQVVTIKKGVSGDLAKKVVRIVKDSKIKVQASIQGDAVRVSGAKRDDLQSTIALLRKEVTDTPLDFNNFRD</sequence>